<proteinExistence type="inferred from homology"/>
<evidence type="ECO:0000250" key="1">
    <source>
        <dbReference type="UniProtKB" id="P0C1B3"/>
    </source>
</evidence>
<evidence type="ECO:0000250" key="2">
    <source>
        <dbReference type="UniProtKB" id="P56271"/>
    </source>
</evidence>
<evidence type="ECO:0000255" key="3"/>
<evidence type="ECO:0000305" key="4"/>
<name>AMYA_ASPAW</name>
<reference key="1">
    <citation type="journal article" date="1990" name="Curr. Genet.">
        <title>Cloning, characterization, and expression of two alpha-amylase genes from Aspergillus niger var. awamori.</title>
        <authorList>
            <person name="Korman D.R."/>
            <person name="Bayliss F.T."/>
            <person name="Barnett C.C."/>
            <person name="Carmona C.L."/>
            <person name="Kodama K.H."/>
            <person name="Royer T.J."/>
            <person name="Thompson S.A."/>
            <person name="Ward M."/>
            <person name="Wilson L.J."/>
            <person name="Berka R.M."/>
        </authorList>
    </citation>
    <scope>NUCLEOTIDE SEQUENCE [GENOMIC DNA]</scope>
    <source>
        <strain>UVK143F</strain>
    </source>
</reference>
<protein>
    <recommendedName>
        <fullName>Alpha-amylase A</fullName>
        <ecNumber>3.2.1.1</ecNumber>
    </recommendedName>
    <alternativeName>
        <fullName>1,4-alpha-D-glucan glucanohydrolase A</fullName>
    </alternativeName>
</protein>
<accession>Q02905</accession>
<dbReference type="EC" id="3.2.1.1"/>
<dbReference type="EMBL" id="X52755">
    <property type="protein sequence ID" value="CAA36966.1"/>
    <property type="molecule type" value="Genomic_DNA"/>
</dbReference>
<dbReference type="PIR" id="A48305">
    <property type="entry name" value="A48305"/>
</dbReference>
<dbReference type="SMR" id="Q02905"/>
<dbReference type="CAZy" id="GH13">
    <property type="family name" value="Glycoside Hydrolase Family 13"/>
</dbReference>
<dbReference type="GlyCosmos" id="Q02905">
    <property type="glycosylation" value="1 site, No reported glycans"/>
</dbReference>
<dbReference type="GO" id="GO:0004556">
    <property type="term" value="F:alpha-amylase activity"/>
    <property type="evidence" value="ECO:0007669"/>
    <property type="project" value="UniProtKB-EC"/>
</dbReference>
<dbReference type="GO" id="GO:0005509">
    <property type="term" value="F:calcium ion binding"/>
    <property type="evidence" value="ECO:0007669"/>
    <property type="project" value="InterPro"/>
</dbReference>
<dbReference type="GO" id="GO:0016052">
    <property type="term" value="P:carbohydrate catabolic process"/>
    <property type="evidence" value="ECO:0007669"/>
    <property type="project" value="InterPro"/>
</dbReference>
<dbReference type="CDD" id="cd11319">
    <property type="entry name" value="AmyAc_euk_AmyA"/>
    <property type="match status" value="1"/>
</dbReference>
<dbReference type="FunFam" id="2.60.40.1180:FF:000037">
    <property type="entry name" value="Alpha-amylase A"/>
    <property type="match status" value="1"/>
</dbReference>
<dbReference type="FunFam" id="3.20.20.80:FF:000120">
    <property type="entry name" value="Alpha-amylase A"/>
    <property type="match status" value="1"/>
</dbReference>
<dbReference type="Gene3D" id="3.20.20.80">
    <property type="entry name" value="Glycosidases"/>
    <property type="match status" value="1"/>
</dbReference>
<dbReference type="Gene3D" id="2.60.40.1180">
    <property type="entry name" value="Golgi alpha-mannosidase II"/>
    <property type="match status" value="1"/>
</dbReference>
<dbReference type="InterPro" id="IPR013777">
    <property type="entry name" value="A-amylase-like"/>
</dbReference>
<dbReference type="InterPro" id="IPR015340">
    <property type="entry name" value="A_amylase_C_dom"/>
</dbReference>
<dbReference type="InterPro" id="IPR006046">
    <property type="entry name" value="Alpha_amylase"/>
</dbReference>
<dbReference type="InterPro" id="IPR006047">
    <property type="entry name" value="Glyco_hydro_13_cat_dom"/>
</dbReference>
<dbReference type="InterPro" id="IPR013780">
    <property type="entry name" value="Glyco_hydro_b"/>
</dbReference>
<dbReference type="InterPro" id="IPR017853">
    <property type="entry name" value="Glycoside_hydrolase_SF"/>
</dbReference>
<dbReference type="PANTHER" id="PTHR10357:SF215">
    <property type="entry name" value="ALPHA-AMYLASE 1"/>
    <property type="match status" value="1"/>
</dbReference>
<dbReference type="PANTHER" id="PTHR10357">
    <property type="entry name" value="ALPHA-AMYLASE FAMILY MEMBER"/>
    <property type="match status" value="1"/>
</dbReference>
<dbReference type="Pfam" id="PF09260">
    <property type="entry name" value="A_amylase_dom_C"/>
    <property type="match status" value="1"/>
</dbReference>
<dbReference type="Pfam" id="PF00128">
    <property type="entry name" value="Alpha-amylase"/>
    <property type="match status" value="1"/>
</dbReference>
<dbReference type="PIRSF" id="PIRSF001024">
    <property type="entry name" value="Alph-amyl_fung"/>
    <property type="match status" value="1"/>
</dbReference>
<dbReference type="PRINTS" id="PR00110">
    <property type="entry name" value="ALPHAAMYLASE"/>
</dbReference>
<dbReference type="SMART" id="SM00642">
    <property type="entry name" value="Aamy"/>
    <property type="match status" value="1"/>
</dbReference>
<dbReference type="SUPFAM" id="SSF51445">
    <property type="entry name" value="(Trans)glycosidases"/>
    <property type="match status" value="1"/>
</dbReference>
<dbReference type="SUPFAM" id="SSF51011">
    <property type="entry name" value="Glycosyl hydrolase domain"/>
    <property type="match status" value="1"/>
</dbReference>
<sequence length="498" mass="54880">MMVAWWSLFLYGLQVAAPALAATPADWRSQSIYFLLTDRFARTDGSTTATCNTADQKYCGGTWQGIIDKLDYIQGMGFTAIWITPVTAQLPQTTAYGDAYHGYWQQDIYSLNENYGTADDLKALSSALHERGMYLMVDVVANHMGYDGAGSSVDYSVFKPFSSQDYFHPFCFIQNYEDQTQVEDCWLGDNTVSLPDLDTTKDVVKNEWYDWVGSLVSNYSIDGLRIDTVKHVQKDFWPGYNKAAGVYCIGEVLDGDPAYTCPYQNVMDGVLNYPIYYPLLNAFKSTSGSMDDLYNMINTVKSDCPDSTLLGTFVENHDNPRFASYTNDIALAKNVAAFIILNDGIPIIYAGQEQHYAGGNDPANREATWLSGYPTDSELYKLIASRNAIRNYAISKDTGFVTYKNWPIYKDDTTIPMRKGTDGSQIVTILSNKGASGDSYTLSLSGAGYTAGQQLTEVIGCTTVTVGSDGNVPVPMAGGLPRVLYPTEKLAGSKICYG</sequence>
<organism>
    <name type="scientific">Aspergillus awamori</name>
    <name type="common">Black koji mold</name>
    <dbReference type="NCBI Taxonomy" id="105351"/>
    <lineage>
        <taxon>Eukaryota</taxon>
        <taxon>Fungi</taxon>
        <taxon>Dikarya</taxon>
        <taxon>Ascomycota</taxon>
        <taxon>Pezizomycotina</taxon>
        <taxon>Eurotiomycetes</taxon>
        <taxon>Eurotiomycetidae</taxon>
        <taxon>Eurotiales</taxon>
        <taxon>Aspergillaceae</taxon>
        <taxon>Aspergillus</taxon>
    </lineage>
</organism>
<feature type="signal peptide" evidence="3">
    <location>
        <begin position="1"/>
        <end position="21"/>
    </location>
</feature>
<feature type="chain" id="PRO_0000001347" description="Alpha-amylase A">
    <location>
        <begin position="22"/>
        <end position="498"/>
    </location>
</feature>
<feature type="active site" description="Nucleophile" evidence="2">
    <location>
        <position position="227"/>
    </location>
</feature>
<feature type="active site" description="Proton donor" evidence="2">
    <location>
        <position position="251"/>
    </location>
</feature>
<feature type="binding site" evidence="1">
    <location>
        <position position="56"/>
    </location>
    <ligand>
        <name>substrate</name>
    </ligand>
</feature>
<feature type="binding site" evidence="1">
    <location>
        <position position="104"/>
    </location>
    <ligand>
        <name>substrate</name>
    </ligand>
</feature>
<feature type="binding site" evidence="1">
    <location>
        <position position="142"/>
    </location>
    <ligand>
        <name>Ca(2+)</name>
        <dbReference type="ChEBI" id="CHEBI:29108"/>
        <label>1</label>
    </ligand>
</feature>
<feature type="binding site" evidence="1">
    <location>
        <position position="143"/>
    </location>
    <ligand>
        <name>substrate</name>
    </ligand>
</feature>
<feature type="binding site" evidence="2">
    <location>
        <position position="183"/>
    </location>
    <ligand>
        <name>Ca(2+)</name>
        <dbReference type="ChEBI" id="CHEBI:29108"/>
        <label>1</label>
    </ligand>
</feature>
<feature type="binding site" evidence="2">
    <location>
        <position position="196"/>
    </location>
    <ligand>
        <name>Ca(2+)</name>
        <dbReference type="ChEBI" id="CHEBI:29108"/>
        <label>1</label>
    </ligand>
</feature>
<feature type="binding site" evidence="1">
    <location>
        <position position="225"/>
    </location>
    <ligand>
        <name>substrate</name>
    </ligand>
</feature>
<feature type="binding site" evidence="1">
    <location>
        <position position="227"/>
    </location>
    <ligand>
        <name>Ca(2+)</name>
        <dbReference type="ChEBI" id="CHEBI:29108"/>
        <label>2</label>
    </ligand>
</feature>
<feature type="binding site" evidence="1">
    <location>
        <begin position="230"/>
        <end position="231"/>
    </location>
    <ligand>
        <name>substrate</name>
    </ligand>
</feature>
<feature type="binding site" evidence="1">
    <location>
        <position position="231"/>
    </location>
    <ligand>
        <name>Ca(2+)</name>
        <dbReference type="ChEBI" id="CHEBI:29108"/>
        <label>1</label>
    </ligand>
</feature>
<feature type="binding site" evidence="1">
    <location>
        <position position="251"/>
    </location>
    <ligand>
        <name>Ca(2+)</name>
        <dbReference type="ChEBI" id="CHEBI:29108"/>
        <label>2</label>
    </ligand>
</feature>
<feature type="binding site" evidence="1">
    <location>
        <position position="255"/>
    </location>
    <ligand>
        <name>substrate</name>
    </ligand>
</feature>
<feature type="binding site" evidence="1">
    <location>
        <position position="318"/>
    </location>
    <ligand>
        <name>substrate</name>
    </ligand>
</feature>
<feature type="binding site" evidence="1">
    <location>
        <position position="365"/>
    </location>
    <ligand>
        <name>substrate</name>
    </ligand>
</feature>
<feature type="site" description="Transition state stabilizer" evidence="1">
    <location>
        <position position="318"/>
    </location>
</feature>
<feature type="glycosylation site" description="N-linked (GlcNAc...) asparagine" evidence="3">
    <location>
        <position position="218"/>
    </location>
</feature>
<feature type="disulfide bond" evidence="2">
    <location>
        <begin position="51"/>
        <end position="59"/>
    </location>
</feature>
<feature type="disulfide bond" evidence="2">
    <location>
        <begin position="171"/>
        <end position="185"/>
    </location>
</feature>
<feature type="disulfide bond" evidence="2">
    <location>
        <begin position="261"/>
        <end position="304"/>
    </location>
</feature>
<feature type="disulfide bond" evidence="2">
    <location>
        <begin position="461"/>
        <end position="496"/>
    </location>
</feature>
<comment type="catalytic activity">
    <reaction>
        <text>Endohydrolysis of (1-&gt;4)-alpha-D-glucosidic linkages in polysaccharides containing three or more (1-&gt;4)-alpha-linked D-glucose units.</text>
        <dbReference type="EC" id="3.2.1.1"/>
    </reaction>
</comment>
<comment type="cofactor">
    <cofactor evidence="1">
        <name>Ca(2+)</name>
        <dbReference type="ChEBI" id="CHEBI:29108"/>
    </cofactor>
    <text evidence="1">Binds 2 calcium ions per subunit. Calcium is inhibitory at high concentrations.</text>
</comment>
<comment type="similarity">
    <text evidence="4">Belongs to the glycosyl hydrolase 13 family.</text>
</comment>
<gene>
    <name type="primary">amyA</name>
</gene>
<keyword id="KW-0106">Calcium</keyword>
<keyword id="KW-0119">Carbohydrate metabolism</keyword>
<keyword id="KW-1015">Disulfide bond</keyword>
<keyword id="KW-0325">Glycoprotein</keyword>
<keyword id="KW-0326">Glycosidase</keyword>
<keyword id="KW-0378">Hydrolase</keyword>
<keyword id="KW-0479">Metal-binding</keyword>
<keyword id="KW-0732">Signal</keyword>